<keyword id="KW-0067">ATP-binding</keyword>
<keyword id="KW-0963">Cytoplasm</keyword>
<keyword id="KW-0460">Magnesium</keyword>
<keyword id="KW-0479">Metal-binding</keyword>
<keyword id="KW-0547">Nucleotide-binding</keyword>
<keyword id="KW-0554">One-carbon metabolism</keyword>
<keyword id="KW-0630">Potassium</keyword>
<keyword id="KW-0808">Transferase</keyword>
<sequence>MSKNYLFTSESVSEGHPDKLADQISDAILDEILKQDKNARVACETLVKTGMALVAGEITTSAWVDIEELVRNVITETGYDNASKGIDGRTCSVINAIGKQSRDITQGVDRGSLEDLGAGDQGLMFGFATNETPTLMPSAIYYSHLLMRKQAELRKSGKLAWLRPDAKAQVTLAYENDKPKFIDTIVLSTQHNESISQKELHDAVIEEIVKKVIPNELITKDTKYHINPTGVFLIGGPQGDCGLTGRKIIVDTYGGAAHHGGGAFSGKDPSKVDRSGAYMGRYIAKNIVAAGLADKCEVQVAYAIGVAKPVSLMVNTFGTGKITDNQIEKLVAEVFDLRVGKIIENLDLLRPIYRKTSNYGHFGRELPEFTWEKIDKADILKSAARI</sequence>
<accession>Q14JT0</accession>
<dbReference type="EC" id="2.5.1.6" evidence="1"/>
<dbReference type="EMBL" id="AM286280">
    <property type="protein sequence ID" value="CAL08165.1"/>
    <property type="molecule type" value="Genomic_DNA"/>
</dbReference>
<dbReference type="RefSeq" id="WP_003019918.1">
    <property type="nucleotide sequence ID" value="NC_008245.1"/>
</dbReference>
<dbReference type="SMR" id="Q14JT0"/>
<dbReference type="KEGG" id="ftf:FTF0149c"/>
<dbReference type="HOGENOM" id="CLU_041802_1_1_6"/>
<dbReference type="UniPathway" id="UPA00315">
    <property type="reaction ID" value="UER00080"/>
</dbReference>
<dbReference type="GO" id="GO:0005737">
    <property type="term" value="C:cytoplasm"/>
    <property type="evidence" value="ECO:0007669"/>
    <property type="project" value="UniProtKB-SubCell"/>
</dbReference>
<dbReference type="GO" id="GO:0005524">
    <property type="term" value="F:ATP binding"/>
    <property type="evidence" value="ECO:0007669"/>
    <property type="project" value="UniProtKB-UniRule"/>
</dbReference>
<dbReference type="GO" id="GO:0000287">
    <property type="term" value="F:magnesium ion binding"/>
    <property type="evidence" value="ECO:0007669"/>
    <property type="project" value="UniProtKB-UniRule"/>
</dbReference>
<dbReference type="GO" id="GO:0004478">
    <property type="term" value="F:methionine adenosyltransferase activity"/>
    <property type="evidence" value="ECO:0007669"/>
    <property type="project" value="UniProtKB-UniRule"/>
</dbReference>
<dbReference type="GO" id="GO:0006730">
    <property type="term" value="P:one-carbon metabolic process"/>
    <property type="evidence" value="ECO:0007669"/>
    <property type="project" value="UniProtKB-KW"/>
</dbReference>
<dbReference type="GO" id="GO:0006556">
    <property type="term" value="P:S-adenosylmethionine biosynthetic process"/>
    <property type="evidence" value="ECO:0007669"/>
    <property type="project" value="UniProtKB-UniRule"/>
</dbReference>
<dbReference type="CDD" id="cd18079">
    <property type="entry name" value="S-AdoMet_synt"/>
    <property type="match status" value="1"/>
</dbReference>
<dbReference type="FunFam" id="3.30.300.10:FF:000003">
    <property type="entry name" value="S-adenosylmethionine synthase"/>
    <property type="match status" value="1"/>
</dbReference>
<dbReference type="Gene3D" id="3.30.300.10">
    <property type="match status" value="3"/>
</dbReference>
<dbReference type="HAMAP" id="MF_00086">
    <property type="entry name" value="S_AdoMet_synth1"/>
    <property type="match status" value="1"/>
</dbReference>
<dbReference type="InterPro" id="IPR022631">
    <property type="entry name" value="ADOMET_SYNTHASE_CS"/>
</dbReference>
<dbReference type="InterPro" id="IPR022630">
    <property type="entry name" value="S-AdoMet_synt_C"/>
</dbReference>
<dbReference type="InterPro" id="IPR022629">
    <property type="entry name" value="S-AdoMet_synt_central"/>
</dbReference>
<dbReference type="InterPro" id="IPR022628">
    <property type="entry name" value="S-AdoMet_synt_N"/>
</dbReference>
<dbReference type="InterPro" id="IPR002133">
    <property type="entry name" value="S-AdoMet_synthetase"/>
</dbReference>
<dbReference type="InterPro" id="IPR022636">
    <property type="entry name" value="S-AdoMet_synthetase_sfam"/>
</dbReference>
<dbReference type="NCBIfam" id="TIGR01034">
    <property type="entry name" value="metK"/>
    <property type="match status" value="1"/>
</dbReference>
<dbReference type="PANTHER" id="PTHR11964">
    <property type="entry name" value="S-ADENOSYLMETHIONINE SYNTHETASE"/>
    <property type="match status" value="1"/>
</dbReference>
<dbReference type="Pfam" id="PF02773">
    <property type="entry name" value="S-AdoMet_synt_C"/>
    <property type="match status" value="1"/>
</dbReference>
<dbReference type="Pfam" id="PF02772">
    <property type="entry name" value="S-AdoMet_synt_M"/>
    <property type="match status" value="1"/>
</dbReference>
<dbReference type="Pfam" id="PF00438">
    <property type="entry name" value="S-AdoMet_synt_N"/>
    <property type="match status" value="1"/>
</dbReference>
<dbReference type="PIRSF" id="PIRSF000497">
    <property type="entry name" value="MAT"/>
    <property type="match status" value="1"/>
</dbReference>
<dbReference type="SUPFAM" id="SSF55973">
    <property type="entry name" value="S-adenosylmethionine synthetase"/>
    <property type="match status" value="3"/>
</dbReference>
<dbReference type="PROSITE" id="PS00376">
    <property type="entry name" value="ADOMET_SYNTHASE_1"/>
    <property type="match status" value="1"/>
</dbReference>
<dbReference type="PROSITE" id="PS00377">
    <property type="entry name" value="ADOMET_SYNTHASE_2"/>
    <property type="match status" value="1"/>
</dbReference>
<name>METK_FRAT1</name>
<comment type="function">
    <text evidence="1">Catalyzes the formation of S-adenosylmethionine (AdoMet) from methionine and ATP. The overall synthetic reaction is composed of two sequential steps, AdoMet formation and the subsequent tripolyphosphate hydrolysis which occurs prior to release of AdoMet from the enzyme.</text>
</comment>
<comment type="catalytic activity">
    <reaction evidence="1">
        <text>L-methionine + ATP + H2O = S-adenosyl-L-methionine + phosphate + diphosphate</text>
        <dbReference type="Rhea" id="RHEA:21080"/>
        <dbReference type="ChEBI" id="CHEBI:15377"/>
        <dbReference type="ChEBI" id="CHEBI:30616"/>
        <dbReference type="ChEBI" id="CHEBI:33019"/>
        <dbReference type="ChEBI" id="CHEBI:43474"/>
        <dbReference type="ChEBI" id="CHEBI:57844"/>
        <dbReference type="ChEBI" id="CHEBI:59789"/>
        <dbReference type="EC" id="2.5.1.6"/>
    </reaction>
</comment>
<comment type="cofactor">
    <cofactor evidence="1">
        <name>Mg(2+)</name>
        <dbReference type="ChEBI" id="CHEBI:18420"/>
    </cofactor>
    <text evidence="1">Binds 2 divalent ions per subunit.</text>
</comment>
<comment type="cofactor">
    <cofactor evidence="1">
        <name>K(+)</name>
        <dbReference type="ChEBI" id="CHEBI:29103"/>
    </cofactor>
    <text evidence="1">Binds 1 potassium ion per subunit.</text>
</comment>
<comment type="pathway">
    <text evidence="1">Amino-acid biosynthesis; S-adenosyl-L-methionine biosynthesis; S-adenosyl-L-methionine from L-methionine: step 1/1.</text>
</comment>
<comment type="subunit">
    <text evidence="1">Homotetramer; dimer of dimers.</text>
</comment>
<comment type="subcellular location">
    <subcellularLocation>
        <location evidence="1">Cytoplasm</location>
    </subcellularLocation>
</comment>
<comment type="similarity">
    <text evidence="1">Belongs to the AdoMet synthase family.</text>
</comment>
<gene>
    <name evidence="1" type="primary">metK</name>
    <name type="ordered locus">FTF0149c</name>
</gene>
<protein>
    <recommendedName>
        <fullName evidence="1">S-adenosylmethionine synthase</fullName>
        <shortName evidence="1">AdoMet synthase</shortName>
        <ecNumber evidence="1">2.5.1.6</ecNumber>
    </recommendedName>
    <alternativeName>
        <fullName evidence="1">MAT</fullName>
    </alternativeName>
    <alternativeName>
        <fullName evidence="1">Methionine adenosyltransferase</fullName>
    </alternativeName>
</protein>
<evidence type="ECO:0000255" key="1">
    <source>
        <dbReference type="HAMAP-Rule" id="MF_00086"/>
    </source>
</evidence>
<organism>
    <name type="scientific">Francisella tularensis subsp. tularensis (strain FSC 198)</name>
    <dbReference type="NCBI Taxonomy" id="393115"/>
    <lineage>
        <taxon>Bacteria</taxon>
        <taxon>Pseudomonadati</taxon>
        <taxon>Pseudomonadota</taxon>
        <taxon>Gammaproteobacteria</taxon>
        <taxon>Thiotrichales</taxon>
        <taxon>Francisellaceae</taxon>
        <taxon>Francisella</taxon>
    </lineage>
</organism>
<feature type="chain" id="PRO_0000302916" description="S-adenosylmethionine synthase">
    <location>
        <begin position="1"/>
        <end position="386"/>
    </location>
</feature>
<feature type="region of interest" description="Flexible loop" evidence="1">
    <location>
        <begin position="100"/>
        <end position="110"/>
    </location>
</feature>
<feature type="binding site" description="in other chain" evidence="1">
    <location>
        <position position="16"/>
    </location>
    <ligand>
        <name>ATP</name>
        <dbReference type="ChEBI" id="CHEBI:30616"/>
        <note>ligand shared between two neighboring subunits</note>
    </ligand>
</feature>
<feature type="binding site" evidence="1">
    <location>
        <position position="18"/>
    </location>
    <ligand>
        <name>Mg(2+)</name>
        <dbReference type="ChEBI" id="CHEBI:18420"/>
    </ligand>
</feature>
<feature type="binding site" evidence="1">
    <location>
        <position position="44"/>
    </location>
    <ligand>
        <name>K(+)</name>
        <dbReference type="ChEBI" id="CHEBI:29103"/>
    </ligand>
</feature>
<feature type="binding site" description="in other chain" evidence="1">
    <location>
        <position position="57"/>
    </location>
    <ligand>
        <name>L-methionine</name>
        <dbReference type="ChEBI" id="CHEBI:57844"/>
        <note>ligand shared between two neighboring subunits</note>
    </ligand>
</feature>
<feature type="binding site" description="in other chain" evidence="1">
    <location>
        <position position="100"/>
    </location>
    <ligand>
        <name>L-methionine</name>
        <dbReference type="ChEBI" id="CHEBI:57844"/>
        <note>ligand shared between two neighboring subunits</note>
    </ligand>
</feature>
<feature type="binding site" description="in other chain" evidence="1">
    <location>
        <begin position="165"/>
        <end position="167"/>
    </location>
    <ligand>
        <name>ATP</name>
        <dbReference type="ChEBI" id="CHEBI:30616"/>
        <note>ligand shared between two neighboring subunits</note>
    </ligand>
</feature>
<feature type="binding site" evidence="1">
    <location>
        <position position="240"/>
    </location>
    <ligand>
        <name>ATP</name>
        <dbReference type="ChEBI" id="CHEBI:30616"/>
        <note>ligand shared between two neighboring subunits</note>
    </ligand>
</feature>
<feature type="binding site" evidence="1">
    <location>
        <position position="240"/>
    </location>
    <ligand>
        <name>L-methionine</name>
        <dbReference type="ChEBI" id="CHEBI:57844"/>
        <note>ligand shared between two neighboring subunits</note>
    </ligand>
</feature>
<feature type="binding site" description="in other chain" evidence="1">
    <location>
        <begin position="246"/>
        <end position="247"/>
    </location>
    <ligand>
        <name>ATP</name>
        <dbReference type="ChEBI" id="CHEBI:30616"/>
        <note>ligand shared between two neighboring subunits</note>
    </ligand>
</feature>
<feature type="binding site" evidence="1">
    <location>
        <position position="263"/>
    </location>
    <ligand>
        <name>ATP</name>
        <dbReference type="ChEBI" id="CHEBI:30616"/>
        <note>ligand shared between two neighboring subunits</note>
    </ligand>
</feature>
<feature type="binding site" evidence="1">
    <location>
        <position position="267"/>
    </location>
    <ligand>
        <name>ATP</name>
        <dbReference type="ChEBI" id="CHEBI:30616"/>
        <note>ligand shared between two neighboring subunits</note>
    </ligand>
</feature>
<feature type="binding site" description="in other chain" evidence="1">
    <location>
        <position position="271"/>
    </location>
    <ligand>
        <name>L-methionine</name>
        <dbReference type="ChEBI" id="CHEBI:57844"/>
        <note>ligand shared between two neighboring subunits</note>
    </ligand>
</feature>
<reference key="1">
    <citation type="journal article" date="2007" name="PLoS ONE">
        <title>Genome sequencing shows that European isolates of Francisella tularensis subspecies tularensis are almost identical to US laboratory strain Schu S4.</title>
        <authorList>
            <person name="Chaudhuri R.R."/>
            <person name="Ren C.-P."/>
            <person name="Desmond L."/>
            <person name="Vincent G.A."/>
            <person name="Silman N.J."/>
            <person name="Brehm J.K."/>
            <person name="Elmore M.J."/>
            <person name="Hudson M.J."/>
            <person name="Forsman M."/>
            <person name="Isherwood K.E."/>
            <person name="Gurycova D."/>
            <person name="Minton N.P."/>
            <person name="Titball R.W."/>
            <person name="Pallen M.J."/>
            <person name="Vipond R."/>
        </authorList>
    </citation>
    <scope>NUCLEOTIDE SEQUENCE [LARGE SCALE GENOMIC DNA]</scope>
    <source>
        <strain>FSC 198</strain>
    </source>
</reference>
<proteinExistence type="inferred from homology"/>